<proteinExistence type="inferred from homology"/>
<gene>
    <name type="primary">PPN1</name>
    <name type="ordered locus">DEHA2F22264g</name>
</gene>
<reference key="1">
    <citation type="journal article" date="2004" name="Nature">
        <title>Genome evolution in yeasts.</title>
        <authorList>
            <person name="Dujon B."/>
            <person name="Sherman D."/>
            <person name="Fischer G."/>
            <person name="Durrens P."/>
            <person name="Casaregola S."/>
            <person name="Lafontaine I."/>
            <person name="de Montigny J."/>
            <person name="Marck C."/>
            <person name="Neuveglise C."/>
            <person name="Talla E."/>
            <person name="Goffard N."/>
            <person name="Frangeul L."/>
            <person name="Aigle M."/>
            <person name="Anthouard V."/>
            <person name="Babour A."/>
            <person name="Barbe V."/>
            <person name="Barnay S."/>
            <person name="Blanchin S."/>
            <person name="Beckerich J.-M."/>
            <person name="Beyne E."/>
            <person name="Bleykasten C."/>
            <person name="Boisrame A."/>
            <person name="Boyer J."/>
            <person name="Cattolico L."/>
            <person name="Confanioleri F."/>
            <person name="de Daruvar A."/>
            <person name="Despons L."/>
            <person name="Fabre E."/>
            <person name="Fairhead C."/>
            <person name="Ferry-Dumazet H."/>
            <person name="Groppi A."/>
            <person name="Hantraye F."/>
            <person name="Hennequin C."/>
            <person name="Jauniaux N."/>
            <person name="Joyet P."/>
            <person name="Kachouri R."/>
            <person name="Kerrest A."/>
            <person name="Koszul R."/>
            <person name="Lemaire M."/>
            <person name="Lesur I."/>
            <person name="Ma L."/>
            <person name="Muller H."/>
            <person name="Nicaud J.-M."/>
            <person name="Nikolski M."/>
            <person name="Oztas S."/>
            <person name="Ozier-Kalogeropoulos O."/>
            <person name="Pellenz S."/>
            <person name="Potier S."/>
            <person name="Richard G.-F."/>
            <person name="Straub M.-L."/>
            <person name="Suleau A."/>
            <person name="Swennen D."/>
            <person name="Tekaia F."/>
            <person name="Wesolowski-Louvel M."/>
            <person name="Westhof E."/>
            <person name="Wirth B."/>
            <person name="Zeniou-Meyer M."/>
            <person name="Zivanovic Y."/>
            <person name="Bolotin-Fukuhara M."/>
            <person name="Thierry A."/>
            <person name="Bouchier C."/>
            <person name="Caudron B."/>
            <person name="Scarpelli C."/>
            <person name="Gaillardin C."/>
            <person name="Weissenbach J."/>
            <person name="Wincker P."/>
            <person name="Souciet J.-L."/>
        </authorList>
    </citation>
    <scope>NUCLEOTIDE SEQUENCE [LARGE SCALE GENOMIC DNA]</scope>
    <source>
        <strain>ATCC 36239 / CBS 767 / BCRC 21394 / JCM 1990 / NBRC 0083 / IGC 2968</strain>
    </source>
</reference>
<feature type="chain" id="PRO_0000058546" description="Endopolyphosphatase">
    <location>
        <begin position="1"/>
        <end position="713"/>
    </location>
</feature>
<feature type="topological domain" description="Cytoplasmic" evidence="2">
    <location>
        <begin position="1"/>
        <end position="19"/>
    </location>
</feature>
<feature type="transmembrane region" description="Helical; Signal-anchor for type II membrane protein" evidence="2">
    <location>
        <begin position="20"/>
        <end position="40"/>
    </location>
</feature>
<feature type="topological domain" description="Vacuolar" evidence="2">
    <location>
        <begin position="41"/>
        <end position="713"/>
    </location>
</feature>
<feature type="region of interest" description="Disordered" evidence="3">
    <location>
        <begin position="399"/>
        <end position="430"/>
    </location>
</feature>
<feature type="region of interest" description="Disordered" evidence="3">
    <location>
        <begin position="640"/>
        <end position="684"/>
    </location>
</feature>
<feature type="compositionally biased region" description="Acidic residues" evidence="3">
    <location>
        <begin position="399"/>
        <end position="418"/>
    </location>
</feature>
<feature type="compositionally biased region" description="Basic residues" evidence="3">
    <location>
        <begin position="640"/>
        <end position="659"/>
    </location>
</feature>
<feature type="compositionally biased region" description="Basic and acidic residues" evidence="3">
    <location>
        <begin position="660"/>
        <end position="683"/>
    </location>
</feature>
<feature type="glycosylation site" description="N-linked (GlcNAc...) asparagine" evidence="2">
    <location>
        <position position="507"/>
    </location>
</feature>
<feature type="glycosylation site" description="N-linked (GlcNAc...) asparagine" evidence="2">
    <location>
        <position position="645"/>
    </location>
</feature>
<comment type="function">
    <text evidence="1">Catalyzes the hydrolysis of inorganic polyphosphate (polyP) chains of many hundreds of phosphate residues into shorter lengths.</text>
</comment>
<comment type="catalytic activity">
    <reaction evidence="1">
        <text>[phosphate](n+1) + n H2O = (n+1) phosphate + n H(+)</text>
        <dbReference type="Rhea" id="RHEA:22452"/>
        <dbReference type="Rhea" id="RHEA-COMP:14280"/>
        <dbReference type="ChEBI" id="CHEBI:15377"/>
        <dbReference type="ChEBI" id="CHEBI:15378"/>
        <dbReference type="ChEBI" id="CHEBI:16838"/>
        <dbReference type="ChEBI" id="CHEBI:43474"/>
        <dbReference type="EC" id="3.6.1.10"/>
    </reaction>
</comment>
<comment type="cofactor">
    <cofactor evidence="1">
        <name>a divalent metal cation</name>
        <dbReference type="ChEBI" id="CHEBI:60240"/>
    </cofactor>
</comment>
<comment type="subcellular location">
    <subcellularLocation>
        <location evidence="1">Vacuole membrane</location>
        <topology evidence="1">Single-pass type II membrane protein</topology>
    </subcellularLocation>
</comment>
<comment type="PTM">
    <text evidence="1">Processing by proteases in the vacuole may be required for activation.</text>
</comment>
<comment type="similarity">
    <text evidence="4">Belongs to the endopolyphosphatase PPN1 family.</text>
</comment>
<organism>
    <name type="scientific">Debaryomyces hansenii (strain ATCC 36239 / CBS 767 / BCRC 21394 / JCM 1990 / NBRC 0083 / IGC 2968)</name>
    <name type="common">Yeast</name>
    <name type="synonym">Torulaspora hansenii</name>
    <dbReference type="NCBI Taxonomy" id="284592"/>
    <lineage>
        <taxon>Eukaryota</taxon>
        <taxon>Fungi</taxon>
        <taxon>Dikarya</taxon>
        <taxon>Ascomycota</taxon>
        <taxon>Saccharomycotina</taxon>
        <taxon>Pichiomycetes</taxon>
        <taxon>Debaryomycetaceae</taxon>
        <taxon>Debaryomyces</taxon>
    </lineage>
</organism>
<dbReference type="EC" id="3.6.1.10"/>
<dbReference type="EMBL" id="CR382138">
    <property type="protein sequence ID" value="CAG89712.2"/>
    <property type="molecule type" value="Genomic_DNA"/>
</dbReference>
<dbReference type="RefSeq" id="XP_461311.2">
    <property type="nucleotide sequence ID" value="XM_461311.2"/>
</dbReference>
<dbReference type="SMR" id="Q6BKG0"/>
<dbReference type="FunCoup" id="Q6BKG0">
    <property type="interactions" value="251"/>
</dbReference>
<dbReference type="STRING" id="284592.Q6BKG0"/>
<dbReference type="GlyCosmos" id="Q6BKG0">
    <property type="glycosylation" value="2 sites, No reported glycans"/>
</dbReference>
<dbReference type="GeneID" id="2904257"/>
<dbReference type="KEGG" id="dha:DEHA2F22264g"/>
<dbReference type="VEuPathDB" id="FungiDB:DEHA2F22264g"/>
<dbReference type="eggNOG" id="KOG3770">
    <property type="taxonomic scope" value="Eukaryota"/>
</dbReference>
<dbReference type="HOGENOM" id="CLU_013424_1_0_1"/>
<dbReference type="InParanoid" id="Q6BKG0"/>
<dbReference type="OMA" id="WAERYSV"/>
<dbReference type="OrthoDB" id="348678at2759"/>
<dbReference type="Proteomes" id="UP000000599">
    <property type="component" value="Chromosome F"/>
</dbReference>
<dbReference type="GO" id="GO:0005829">
    <property type="term" value="C:cytosol"/>
    <property type="evidence" value="ECO:0007669"/>
    <property type="project" value="EnsemblFungi"/>
</dbReference>
<dbReference type="GO" id="GO:0000329">
    <property type="term" value="C:fungal-type vacuole membrane"/>
    <property type="evidence" value="ECO:0007669"/>
    <property type="project" value="EnsemblFungi"/>
</dbReference>
<dbReference type="GO" id="GO:0005634">
    <property type="term" value="C:nucleus"/>
    <property type="evidence" value="ECO:0007669"/>
    <property type="project" value="EnsemblFungi"/>
</dbReference>
<dbReference type="GO" id="GO:0000298">
    <property type="term" value="F:endopolyphosphatase activity"/>
    <property type="evidence" value="ECO:0007669"/>
    <property type="project" value="UniProtKB-EC"/>
</dbReference>
<dbReference type="GO" id="GO:0004309">
    <property type="term" value="F:exopolyphosphatase activity"/>
    <property type="evidence" value="ECO:0007669"/>
    <property type="project" value="EnsemblFungi"/>
</dbReference>
<dbReference type="GO" id="GO:0008081">
    <property type="term" value="F:phosphoric diester hydrolase activity"/>
    <property type="evidence" value="ECO:0007669"/>
    <property type="project" value="TreeGrafter"/>
</dbReference>
<dbReference type="GO" id="GO:0006798">
    <property type="term" value="P:polyphosphate catabolic process"/>
    <property type="evidence" value="ECO:0007669"/>
    <property type="project" value="EnsemblFungi"/>
</dbReference>
<dbReference type="CDD" id="cd00842">
    <property type="entry name" value="MPP_ASMase"/>
    <property type="match status" value="1"/>
</dbReference>
<dbReference type="Gene3D" id="3.60.21.10">
    <property type="match status" value="1"/>
</dbReference>
<dbReference type="InterPro" id="IPR041805">
    <property type="entry name" value="ASMase/PPN1_MPP"/>
</dbReference>
<dbReference type="InterPro" id="IPR004843">
    <property type="entry name" value="Calcineurin-like_PHP_ApaH"/>
</dbReference>
<dbReference type="InterPro" id="IPR012358">
    <property type="entry name" value="EndopolyPtase_N1"/>
</dbReference>
<dbReference type="InterPro" id="IPR029052">
    <property type="entry name" value="Metallo-depent_PP-like"/>
</dbReference>
<dbReference type="PANTHER" id="PTHR10340:SF55">
    <property type="entry name" value="ENDOPOLYPHOSPHATASE"/>
    <property type="match status" value="1"/>
</dbReference>
<dbReference type="PANTHER" id="PTHR10340">
    <property type="entry name" value="SPHINGOMYELIN PHOSPHODIESTERASE"/>
    <property type="match status" value="1"/>
</dbReference>
<dbReference type="Pfam" id="PF00149">
    <property type="entry name" value="Metallophos"/>
    <property type="match status" value="1"/>
</dbReference>
<dbReference type="PIRSF" id="PIRSF027093">
    <property type="entry name" value="EndopolyPtase_N1"/>
    <property type="match status" value="1"/>
</dbReference>
<dbReference type="SUPFAM" id="SSF56300">
    <property type="entry name" value="Metallo-dependent phosphatases"/>
    <property type="match status" value="1"/>
</dbReference>
<evidence type="ECO:0000250" key="1">
    <source>
        <dbReference type="UniProtKB" id="Q04119"/>
    </source>
</evidence>
<evidence type="ECO:0000255" key="2"/>
<evidence type="ECO:0000256" key="3">
    <source>
        <dbReference type="SAM" id="MobiDB-lite"/>
    </source>
</evidence>
<evidence type="ECO:0000305" key="4"/>
<keyword id="KW-0325">Glycoprotein</keyword>
<keyword id="KW-0378">Hydrolase</keyword>
<keyword id="KW-0472">Membrane</keyword>
<keyword id="KW-1185">Reference proteome</keyword>
<keyword id="KW-0735">Signal-anchor</keyword>
<keyword id="KW-0812">Transmembrane</keyword>
<keyword id="KW-1133">Transmembrane helix</keyword>
<keyword id="KW-0926">Vacuole</keyword>
<sequence length="713" mass="81885">MSVLIDEKSHRSSGSTRSRIVVTVVGVLLMVSGLAVMLGHQSGSANEALGMEYEKPSVEVLDLEATEVEQLTKLGLSPKPKLKIVKGGDEQVLHGRFLHITDMHPDKYYKTGADVGSLCHSGKGSAGKYGDAVLGCDSPMVLMEDTLKWVKENLKDKIDFVVWTGDNVRHDNDRRYPRTESNIFDMNQRVSELMYETFKEENPRGGRPRQLKIPLVPSLGNNDVFPHNLFSPGPTLQTRELFKIWHDFVPAAQLHIFNRGAYFFKEIIPNELAVLSINTLYLFQSNPLVDNCDRKKDPGHKLFEWLGYTLKEMRARNMKVWLSGHVPPNEKNYDISCLRKYIVWMHEYRDVIIGGLYGHMNIDHFIPLDSKEAYKSIKNKFGKLGFDYELSFENDLYVSDDDDNSDSDSDDDDEDTSLEESYSNFNSPILKDGFEDSVNFKNMDDIRIQGGVPNGKVGYMENVRKEYYANVKGKKKSGYVSERYSIAHVTASVVPTFNSGLRVWEYNITGLQNLLTSDNQPRFAPWNEFFEGLEKLMETQVEADYDDEFITFGQQVEIFKNDNTFPPKMPKSKSLGPAYIPQAFTPERYVQYYADLANINRGEKEFSYEFEYATDDKVYDMDSLTVDDWISLARRLGKPVKEKKNKSNKKSKKKKKNKDKRLLENSEPLKQDGSKDSRLEQDRVQQSARLENLWQHYLKYSFVSSEYENMGMG</sequence>
<protein>
    <recommendedName>
        <fullName>Endopolyphosphatase</fullName>
        <ecNumber>3.6.1.10</ecNumber>
    </recommendedName>
</protein>
<accession>Q6BKG0</accession>
<name>PPN1_DEBHA</name>